<dbReference type="EC" id="6.1.1.16" evidence="1"/>
<dbReference type="EMBL" id="AE017180">
    <property type="protein sequence ID" value="AAR36755.1"/>
    <property type="molecule type" value="Genomic_DNA"/>
</dbReference>
<dbReference type="RefSeq" id="NP_954405.1">
    <property type="nucleotide sequence ID" value="NC_002939.5"/>
</dbReference>
<dbReference type="RefSeq" id="WP_010943976.1">
    <property type="nucleotide sequence ID" value="NC_002939.5"/>
</dbReference>
<dbReference type="SMR" id="Q747A2"/>
<dbReference type="FunCoup" id="Q747A2">
    <property type="interactions" value="496"/>
</dbReference>
<dbReference type="STRING" id="243231.GSU3365"/>
<dbReference type="EnsemblBacteria" id="AAR36755">
    <property type="protein sequence ID" value="AAR36755"/>
    <property type="gene ID" value="GSU3365"/>
</dbReference>
<dbReference type="KEGG" id="gsu:GSU3365"/>
<dbReference type="PATRIC" id="fig|243231.5.peg.3387"/>
<dbReference type="eggNOG" id="COG0215">
    <property type="taxonomic scope" value="Bacteria"/>
</dbReference>
<dbReference type="HOGENOM" id="CLU_013528_0_1_7"/>
<dbReference type="InParanoid" id="Q747A2"/>
<dbReference type="OrthoDB" id="9815130at2"/>
<dbReference type="Proteomes" id="UP000000577">
    <property type="component" value="Chromosome"/>
</dbReference>
<dbReference type="GO" id="GO:0005737">
    <property type="term" value="C:cytoplasm"/>
    <property type="evidence" value="ECO:0000318"/>
    <property type="project" value="GO_Central"/>
</dbReference>
<dbReference type="GO" id="GO:0005829">
    <property type="term" value="C:cytosol"/>
    <property type="evidence" value="ECO:0000318"/>
    <property type="project" value="GO_Central"/>
</dbReference>
<dbReference type="GO" id="GO:0005524">
    <property type="term" value="F:ATP binding"/>
    <property type="evidence" value="ECO:0000318"/>
    <property type="project" value="GO_Central"/>
</dbReference>
<dbReference type="GO" id="GO:0004817">
    <property type="term" value="F:cysteine-tRNA ligase activity"/>
    <property type="evidence" value="ECO:0000318"/>
    <property type="project" value="GO_Central"/>
</dbReference>
<dbReference type="GO" id="GO:0008270">
    <property type="term" value="F:zinc ion binding"/>
    <property type="evidence" value="ECO:0007669"/>
    <property type="project" value="UniProtKB-UniRule"/>
</dbReference>
<dbReference type="GO" id="GO:0006423">
    <property type="term" value="P:cysteinyl-tRNA aminoacylation"/>
    <property type="evidence" value="ECO:0000318"/>
    <property type="project" value="GO_Central"/>
</dbReference>
<dbReference type="CDD" id="cd07963">
    <property type="entry name" value="Anticodon_Ia_Cys"/>
    <property type="match status" value="1"/>
</dbReference>
<dbReference type="CDD" id="cd00672">
    <property type="entry name" value="CysRS_core"/>
    <property type="match status" value="1"/>
</dbReference>
<dbReference type="FunFam" id="3.40.50.620:FF:000009">
    <property type="entry name" value="Cysteine--tRNA ligase"/>
    <property type="match status" value="1"/>
</dbReference>
<dbReference type="Gene3D" id="1.20.120.1910">
    <property type="entry name" value="Cysteine-tRNA ligase, C-terminal anti-codon recognition domain"/>
    <property type="match status" value="1"/>
</dbReference>
<dbReference type="Gene3D" id="3.40.50.620">
    <property type="entry name" value="HUPs"/>
    <property type="match status" value="1"/>
</dbReference>
<dbReference type="HAMAP" id="MF_00041">
    <property type="entry name" value="Cys_tRNA_synth"/>
    <property type="match status" value="1"/>
</dbReference>
<dbReference type="InterPro" id="IPR015803">
    <property type="entry name" value="Cys-tRNA-ligase"/>
</dbReference>
<dbReference type="InterPro" id="IPR015273">
    <property type="entry name" value="Cys-tRNA-synt_Ia_DALR"/>
</dbReference>
<dbReference type="InterPro" id="IPR024909">
    <property type="entry name" value="Cys-tRNA/MSH_ligase"/>
</dbReference>
<dbReference type="InterPro" id="IPR056411">
    <property type="entry name" value="CysS_C"/>
</dbReference>
<dbReference type="InterPro" id="IPR014729">
    <property type="entry name" value="Rossmann-like_a/b/a_fold"/>
</dbReference>
<dbReference type="InterPro" id="IPR032678">
    <property type="entry name" value="tRNA-synt_1_cat_dom"/>
</dbReference>
<dbReference type="InterPro" id="IPR009080">
    <property type="entry name" value="tRNAsynth_Ia_anticodon-bd"/>
</dbReference>
<dbReference type="NCBIfam" id="TIGR00435">
    <property type="entry name" value="cysS"/>
    <property type="match status" value="1"/>
</dbReference>
<dbReference type="PANTHER" id="PTHR10890:SF3">
    <property type="entry name" value="CYSTEINE--TRNA LIGASE, CYTOPLASMIC"/>
    <property type="match status" value="1"/>
</dbReference>
<dbReference type="PANTHER" id="PTHR10890">
    <property type="entry name" value="CYSTEINYL-TRNA SYNTHETASE"/>
    <property type="match status" value="1"/>
</dbReference>
<dbReference type="Pfam" id="PF23493">
    <property type="entry name" value="CysS_C"/>
    <property type="match status" value="1"/>
</dbReference>
<dbReference type="Pfam" id="PF09190">
    <property type="entry name" value="DALR_2"/>
    <property type="match status" value="1"/>
</dbReference>
<dbReference type="Pfam" id="PF01406">
    <property type="entry name" value="tRNA-synt_1e"/>
    <property type="match status" value="1"/>
</dbReference>
<dbReference type="PRINTS" id="PR00983">
    <property type="entry name" value="TRNASYNTHCYS"/>
</dbReference>
<dbReference type="SMART" id="SM00840">
    <property type="entry name" value="DALR_2"/>
    <property type="match status" value="1"/>
</dbReference>
<dbReference type="SUPFAM" id="SSF47323">
    <property type="entry name" value="Anticodon-binding domain of a subclass of class I aminoacyl-tRNA synthetases"/>
    <property type="match status" value="1"/>
</dbReference>
<dbReference type="SUPFAM" id="SSF52374">
    <property type="entry name" value="Nucleotidylyl transferase"/>
    <property type="match status" value="1"/>
</dbReference>
<keyword id="KW-0030">Aminoacyl-tRNA synthetase</keyword>
<keyword id="KW-0067">ATP-binding</keyword>
<keyword id="KW-0963">Cytoplasm</keyword>
<keyword id="KW-0436">Ligase</keyword>
<keyword id="KW-0479">Metal-binding</keyword>
<keyword id="KW-0547">Nucleotide-binding</keyword>
<keyword id="KW-0648">Protein biosynthesis</keyword>
<keyword id="KW-1185">Reference proteome</keyword>
<keyword id="KW-0862">Zinc</keyword>
<gene>
    <name evidence="1" type="primary">cysS</name>
    <name type="ordered locus">GSU3365</name>
</gene>
<name>SYC_GEOSL</name>
<comment type="catalytic activity">
    <reaction evidence="1">
        <text>tRNA(Cys) + L-cysteine + ATP = L-cysteinyl-tRNA(Cys) + AMP + diphosphate</text>
        <dbReference type="Rhea" id="RHEA:17773"/>
        <dbReference type="Rhea" id="RHEA-COMP:9661"/>
        <dbReference type="Rhea" id="RHEA-COMP:9679"/>
        <dbReference type="ChEBI" id="CHEBI:30616"/>
        <dbReference type="ChEBI" id="CHEBI:33019"/>
        <dbReference type="ChEBI" id="CHEBI:35235"/>
        <dbReference type="ChEBI" id="CHEBI:78442"/>
        <dbReference type="ChEBI" id="CHEBI:78517"/>
        <dbReference type="ChEBI" id="CHEBI:456215"/>
        <dbReference type="EC" id="6.1.1.16"/>
    </reaction>
</comment>
<comment type="cofactor">
    <cofactor evidence="1">
        <name>Zn(2+)</name>
        <dbReference type="ChEBI" id="CHEBI:29105"/>
    </cofactor>
    <text evidence="1">Binds 1 zinc ion per subunit.</text>
</comment>
<comment type="subunit">
    <text evidence="1">Monomer.</text>
</comment>
<comment type="subcellular location">
    <subcellularLocation>
        <location evidence="1">Cytoplasm</location>
    </subcellularLocation>
</comment>
<comment type="similarity">
    <text evidence="1">Belongs to the class-I aminoacyl-tRNA synthetase family.</text>
</comment>
<reference key="1">
    <citation type="journal article" date="2003" name="Science">
        <title>Genome of Geobacter sulfurreducens: metal reduction in subsurface environments.</title>
        <authorList>
            <person name="Methe B.A."/>
            <person name="Nelson K.E."/>
            <person name="Eisen J.A."/>
            <person name="Paulsen I.T."/>
            <person name="Nelson W.C."/>
            <person name="Heidelberg J.F."/>
            <person name="Wu D."/>
            <person name="Wu M."/>
            <person name="Ward N.L."/>
            <person name="Beanan M.J."/>
            <person name="Dodson R.J."/>
            <person name="Madupu R."/>
            <person name="Brinkac L.M."/>
            <person name="Daugherty S.C."/>
            <person name="DeBoy R.T."/>
            <person name="Durkin A.S."/>
            <person name="Gwinn M.L."/>
            <person name="Kolonay J.F."/>
            <person name="Sullivan S.A."/>
            <person name="Haft D.H."/>
            <person name="Selengut J."/>
            <person name="Davidsen T.M."/>
            <person name="Zafar N."/>
            <person name="White O."/>
            <person name="Tran B."/>
            <person name="Romero C."/>
            <person name="Forberger H.A."/>
            <person name="Weidman J.F."/>
            <person name="Khouri H.M."/>
            <person name="Feldblyum T.V."/>
            <person name="Utterback T.R."/>
            <person name="Van Aken S.E."/>
            <person name="Lovley D.R."/>
            <person name="Fraser C.M."/>
        </authorList>
    </citation>
    <scope>NUCLEOTIDE SEQUENCE [LARGE SCALE GENOMIC DNA]</scope>
    <source>
        <strain>ATCC 51573 / DSM 12127 / PCA</strain>
    </source>
</reference>
<accession>Q747A2</accession>
<sequence length="481" mass="53912">MALRVYNTLSGTKEDFVTLEPGRVKMYVCGVTVYDHCHIGHARANVVFDMIYRYLRHAGYEVTYVRNYTDVDDKIINRANKEGVPFNVISERFIAEFDRDMAALGLDLPTYQPKATEHIAEMIQVIERLVAKGFAYAADGDVYFSVEAFDQYLKLSKRNLEEMQAGARIEVGEKKRHPMDFALWKGSKPGEPYWDSPWGQGRPGWHIECSAMSMKYLGETFDIHGGGKDLVFPHHENEIAQSEAANGKPFARYWIHNGFVNINAEKMSKSLGNFFTIKEVLESYDAEVLRFFLLSAHYRSPIDFSDQNLKEAAAGLERIYNALAGIDEAVAADGTGAGRIDEELAEKAAGLPTRFREAMDDDFNTAQALGYVFDLVRAVNRVLAEGEIDRAVLASAREAIDRVGAVLGLFTSEPGAFVERLKSRKAAALPIEAAEIERLIEERNAARKARDFRRADEIRDTLAAQGILLLDSAQGTTWKVK</sequence>
<feature type="chain" id="PRO_0000159402" description="Cysteine--tRNA ligase">
    <location>
        <begin position="1"/>
        <end position="481"/>
    </location>
</feature>
<feature type="short sequence motif" description="'HIGH' region">
    <location>
        <begin position="31"/>
        <end position="41"/>
    </location>
</feature>
<feature type="short sequence motif" description="'KMSKS' region">
    <location>
        <begin position="266"/>
        <end position="270"/>
    </location>
</feature>
<feature type="binding site" evidence="1">
    <location>
        <position position="29"/>
    </location>
    <ligand>
        <name>Zn(2+)</name>
        <dbReference type="ChEBI" id="CHEBI:29105"/>
    </ligand>
</feature>
<feature type="binding site" evidence="1">
    <location>
        <position position="209"/>
    </location>
    <ligand>
        <name>Zn(2+)</name>
        <dbReference type="ChEBI" id="CHEBI:29105"/>
    </ligand>
</feature>
<feature type="binding site" evidence="1">
    <location>
        <position position="234"/>
    </location>
    <ligand>
        <name>Zn(2+)</name>
        <dbReference type="ChEBI" id="CHEBI:29105"/>
    </ligand>
</feature>
<feature type="binding site" evidence="1">
    <location>
        <position position="238"/>
    </location>
    <ligand>
        <name>Zn(2+)</name>
        <dbReference type="ChEBI" id="CHEBI:29105"/>
    </ligand>
</feature>
<feature type="binding site" evidence="1">
    <location>
        <position position="269"/>
    </location>
    <ligand>
        <name>ATP</name>
        <dbReference type="ChEBI" id="CHEBI:30616"/>
    </ligand>
</feature>
<proteinExistence type="inferred from homology"/>
<organism>
    <name type="scientific">Geobacter sulfurreducens (strain ATCC 51573 / DSM 12127 / PCA)</name>
    <dbReference type="NCBI Taxonomy" id="243231"/>
    <lineage>
        <taxon>Bacteria</taxon>
        <taxon>Pseudomonadati</taxon>
        <taxon>Thermodesulfobacteriota</taxon>
        <taxon>Desulfuromonadia</taxon>
        <taxon>Geobacterales</taxon>
        <taxon>Geobacteraceae</taxon>
        <taxon>Geobacter</taxon>
    </lineage>
</organism>
<evidence type="ECO:0000255" key="1">
    <source>
        <dbReference type="HAMAP-Rule" id="MF_00041"/>
    </source>
</evidence>
<protein>
    <recommendedName>
        <fullName evidence="1">Cysteine--tRNA ligase</fullName>
        <ecNumber evidence="1">6.1.1.16</ecNumber>
    </recommendedName>
    <alternativeName>
        <fullName evidence="1">Cysteinyl-tRNA synthetase</fullName>
        <shortName evidence="1">CysRS</shortName>
    </alternativeName>
</protein>